<gene>
    <name evidence="1" type="primary">rbcL</name>
</gene>
<reference key="1">
    <citation type="journal article" date="1995" name="Bot. Acta">
        <title>Molecular phylogeny of the Papilionoideae (family Leguminosae): rbcL sequences versus chemical taxonomy.</title>
        <authorList>
            <person name="Kaess E."/>
            <person name="Wink M."/>
        </authorList>
    </citation>
    <scope>NUCLEOTIDE SEQUENCE [GENOMIC DNA]</scope>
    <source>
        <tissue>Leaf</tissue>
    </source>
</reference>
<keyword id="KW-0113">Calvin cycle</keyword>
<keyword id="KW-0120">Carbon dioxide fixation</keyword>
<keyword id="KW-0150">Chloroplast</keyword>
<keyword id="KW-1015">Disulfide bond</keyword>
<keyword id="KW-0456">Lyase</keyword>
<keyword id="KW-0460">Magnesium</keyword>
<keyword id="KW-0479">Metal-binding</keyword>
<keyword id="KW-0488">Methylation</keyword>
<keyword id="KW-0503">Monooxygenase</keyword>
<keyword id="KW-0560">Oxidoreductase</keyword>
<keyword id="KW-0601">Photorespiration</keyword>
<keyword id="KW-0602">Photosynthesis</keyword>
<keyword id="KW-0934">Plastid</keyword>
<dbReference type="EC" id="4.1.1.39" evidence="1"/>
<dbReference type="EMBL" id="Z70074">
    <property type="protein sequence ID" value="CAA93933.1"/>
    <property type="molecule type" value="Genomic_DNA"/>
</dbReference>
<dbReference type="SMR" id="P69574"/>
<dbReference type="GO" id="GO:0009507">
    <property type="term" value="C:chloroplast"/>
    <property type="evidence" value="ECO:0007669"/>
    <property type="project" value="UniProtKB-SubCell"/>
</dbReference>
<dbReference type="GO" id="GO:0000287">
    <property type="term" value="F:magnesium ion binding"/>
    <property type="evidence" value="ECO:0007669"/>
    <property type="project" value="InterPro"/>
</dbReference>
<dbReference type="GO" id="GO:0004497">
    <property type="term" value="F:monooxygenase activity"/>
    <property type="evidence" value="ECO:0007669"/>
    <property type="project" value="UniProtKB-KW"/>
</dbReference>
<dbReference type="GO" id="GO:0016984">
    <property type="term" value="F:ribulose-bisphosphate carboxylase activity"/>
    <property type="evidence" value="ECO:0007669"/>
    <property type="project" value="UniProtKB-EC"/>
</dbReference>
<dbReference type="GO" id="GO:0009853">
    <property type="term" value="P:photorespiration"/>
    <property type="evidence" value="ECO:0007669"/>
    <property type="project" value="UniProtKB-KW"/>
</dbReference>
<dbReference type="GO" id="GO:0019253">
    <property type="term" value="P:reductive pentose-phosphate cycle"/>
    <property type="evidence" value="ECO:0007669"/>
    <property type="project" value="UniProtKB-KW"/>
</dbReference>
<dbReference type="CDD" id="cd08212">
    <property type="entry name" value="RuBisCO_large_I"/>
    <property type="match status" value="1"/>
</dbReference>
<dbReference type="FunFam" id="3.20.20.110:FF:000001">
    <property type="entry name" value="Ribulose bisphosphate carboxylase large chain"/>
    <property type="match status" value="1"/>
</dbReference>
<dbReference type="FunFam" id="3.30.70.150:FF:000001">
    <property type="entry name" value="Ribulose bisphosphate carboxylase large chain"/>
    <property type="match status" value="1"/>
</dbReference>
<dbReference type="Gene3D" id="3.20.20.110">
    <property type="entry name" value="Ribulose bisphosphate carboxylase, large subunit, C-terminal domain"/>
    <property type="match status" value="1"/>
</dbReference>
<dbReference type="Gene3D" id="3.30.70.150">
    <property type="entry name" value="RuBisCO large subunit, N-terminal domain"/>
    <property type="match status" value="1"/>
</dbReference>
<dbReference type="HAMAP" id="MF_01338">
    <property type="entry name" value="RuBisCO_L_type1"/>
    <property type="match status" value="1"/>
</dbReference>
<dbReference type="InterPro" id="IPR033966">
    <property type="entry name" value="RuBisCO"/>
</dbReference>
<dbReference type="InterPro" id="IPR020878">
    <property type="entry name" value="RuBisCo_large_chain_AS"/>
</dbReference>
<dbReference type="InterPro" id="IPR000685">
    <property type="entry name" value="RuBisCO_lsu_C"/>
</dbReference>
<dbReference type="InterPro" id="IPR036376">
    <property type="entry name" value="RuBisCO_lsu_C_sf"/>
</dbReference>
<dbReference type="InterPro" id="IPR017443">
    <property type="entry name" value="RuBisCO_lsu_fd_N"/>
</dbReference>
<dbReference type="InterPro" id="IPR036422">
    <property type="entry name" value="RuBisCO_lsu_N_sf"/>
</dbReference>
<dbReference type="InterPro" id="IPR020888">
    <property type="entry name" value="RuBisCO_lsuI"/>
</dbReference>
<dbReference type="NCBIfam" id="NF003252">
    <property type="entry name" value="PRK04208.1"/>
    <property type="match status" value="1"/>
</dbReference>
<dbReference type="PANTHER" id="PTHR42704">
    <property type="entry name" value="RIBULOSE BISPHOSPHATE CARBOXYLASE"/>
    <property type="match status" value="1"/>
</dbReference>
<dbReference type="PANTHER" id="PTHR42704:SF16">
    <property type="entry name" value="RIBULOSE BISPHOSPHATE CARBOXYLASE LARGE CHAIN"/>
    <property type="match status" value="1"/>
</dbReference>
<dbReference type="Pfam" id="PF00016">
    <property type="entry name" value="RuBisCO_large"/>
    <property type="match status" value="1"/>
</dbReference>
<dbReference type="Pfam" id="PF02788">
    <property type="entry name" value="RuBisCO_large_N"/>
    <property type="match status" value="1"/>
</dbReference>
<dbReference type="SFLD" id="SFLDG01052">
    <property type="entry name" value="RuBisCO"/>
    <property type="match status" value="1"/>
</dbReference>
<dbReference type="SFLD" id="SFLDS00014">
    <property type="entry name" value="RuBisCO"/>
    <property type="match status" value="1"/>
</dbReference>
<dbReference type="SFLD" id="SFLDG00301">
    <property type="entry name" value="RuBisCO-like_proteins"/>
    <property type="match status" value="1"/>
</dbReference>
<dbReference type="SUPFAM" id="SSF51649">
    <property type="entry name" value="RuBisCo, C-terminal domain"/>
    <property type="match status" value="1"/>
</dbReference>
<dbReference type="SUPFAM" id="SSF54966">
    <property type="entry name" value="RuBisCO, large subunit, small (N-terminal) domain"/>
    <property type="match status" value="1"/>
</dbReference>
<dbReference type="PROSITE" id="PS00157">
    <property type="entry name" value="RUBISCO_LARGE"/>
    <property type="match status" value="1"/>
</dbReference>
<name>RBL_LUPAE</name>
<organism>
    <name type="scientific">Lupinus albescens</name>
    <name type="common">Lupine</name>
    <dbReference type="NCBI Taxonomy" id="53214"/>
    <lineage>
        <taxon>Eukaryota</taxon>
        <taxon>Viridiplantae</taxon>
        <taxon>Streptophyta</taxon>
        <taxon>Embryophyta</taxon>
        <taxon>Tracheophyta</taxon>
        <taxon>Spermatophyta</taxon>
        <taxon>Magnoliopsida</taxon>
        <taxon>eudicotyledons</taxon>
        <taxon>Gunneridae</taxon>
        <taxon>Pentapetalae</taxon>
        <taxon>rosids</taxon>
        <taxon>fabids</taxon>
        <taxon>Fabales</taxon>
        <taxon>Fabaceae</taxon>
        <taxon>Papilionoideae</taxon>
        <taxon>50 kb inversion clade</taxon>
        <taxon>genistoids sensu lato</taxon>
        <taxon>core genistoids</taxon>
        <taxon>Genisteae</taxon>
        <taxon>Lupinus</taxon>
    </lineage>
</organism>
<protein>
    <recommendedName>
        <fullName evidence="1">Ribulose bisphosphate carboxylase large chain</fullName>
        <shortName evidence="1">RuBisCO large subunit</shortName>
        <ecNumber evidence="1">4.1.1.39</ecNumber>
    </recommendedName>
</protein>
<sequence length="455" mass="50287">SVGFKAGVKDYKLTYYTPDYQTKDTDILAAFRVTPQPGVPPEEAGAAVAAESSTGTWTTVWTDGLTSLDRYKGRCYHIEPVAGEESQFIAYVAYPLDLFEEGSVTNMFTSIVGNVFGFKALRALRLEDLRIPNAYVKTFQGPPHGIQVERDKLNKYGRPLLGCTIKPKLGLSAKNYGRAVYECLRGGLDFTKDDENVNSQPFMRWRDRFLFCAEALYKAQAETGEIKGHYLNATAGTCEEMIKRAVFARELGVPIVMHDYLTGGFTANTSLAHYCRDNGLLLHIHRAMHAVIDRQKNHGMHFRVLAKALRLSGGDHIHSGTVVGKLEGEREITLGFVDLLRDDFVEKDRSRGIYFTQDWVSLPGVLPVASGGIHVWHMPALTEIFGDDSVLQFGGGTLGHPWGNAPGAVANRVALEACVQARNEGRDLASEGNQIIREASKWSPELAAACEVWKE</sequence>
<evidence type="ECO:0000255" key="1">
    <source>
        <dbReference type="HAMAP-Rule" id="MF_01338"/>
    </source>
</evidence>
<proteinExistence type="inferred from homology"/>
<geneLocation type="chloroplast"/>
<feature type="chain" id="PRO_0000062507" description="Ribulose bisphosphate carboxylase large chain">
    <location>
        <begin position="1" status="less than"/>
        <end position="455" status="greater than"/>
    </location>
</feature>
<feature type="active site" description="Proton acceptor" evidence="1">
    <location>
        <position position="166"/>
    </location>
</feature>
<feature type="active site" description="Proton acceptor" evidence="1">
    <location>
        <position position="285"/>
    </location>
</feature>
<feature type="binding site" description="in homodimeric partner" evidence="1">
    <location>
        <position position="114"/>
    </location>
    <ligand>
        <name>substrate</name>
    </ligand>
</feature>
<feature type="binding site" evidence="1">
    <location>
        <position position="164"/>
    </location>
    <ligand>
        <name>substrate</name>
    </ligand>
</feature>
<feature type="binding site" evidence="1">
    <location>
        <position position="168"/>
    </location>
    <ligand>
        <name>substrate</name>
    </ligand>
</feature>
<feature type="binding site" description="via carbamate group" evidence="1">
    <location>
        <position position="192"/>
    </location>
    <ligand>
        <name>Mg(2+)</name>
        <dbReference type="ChEBI" id="CHEBI:18420"/>
    </ligand>
</feature>
<feature type="binding site" evidence="1">
    <location>
        <position position="194"/>
    </location>
    <ligand>
        <name>Mg(2+)</name>
        <dbReference type="ChEBI" id="CHEBI:18420"/>
    </ligand>
</feature>
<feature type="binding site" evidence="1">
    <location>
        <position position="195"/>
    </location>
    <ligand>
        <name>Mg(2+)</name>
        <dbReference type="ChEBI" id="CHEBI:18420"/>
    </ligand>
</feature>
<feature type="binding site" evidence="1">
    <location>
        <position position="286"/>
    </location>
    <ligand>
        <name>substrate</name>
    </ligand>
</feature>
<feature type="binding site" evidence="1">
    <location>
        <position position="318"/>
    </location>
    <ligand>
        <name>substrate</name>
    </ligand>
</feature>
<feature type="binding site" evidence="1">
    <location>
        <position position="370"/>
    </location>
    <ligand>
        <name>substrate</name>
    </ligand>
</feature>
<feature type="site" description="Transition state stabilizer" evidence="1">
    <location>
        <position position="325"/>
    </location>
</feature>
<feature type="modified residue" description="N6,N6,N6-trimethyllysine" evidence="1">
    <location>
        <position position="5"/>
    </location>
</feature>
<feature type="modified residue" description="N6-carboxylysine" evidence="1">
    <location>
        <position position="192"/>
    </location>
</feature>
<feature type="disulfide bond" description="Interchain; in linked form" evidence="1">
    <location>
        <position position="238"/>
    </location>
</feature>
<feature type="non-terminal residue">
    <location>
        <position position="1"/>
    </location>
</feature>
<feature type="non-terminal residue">
    <location>
        <position position="455"/>
    </location>
</feature>
<accession>P69574</accession>
<accession>P92396</accession>
<accession>P92399</accession>
<accession>P92408</accession>
<comment type="function">
    <text evidence="1">RuBisCO catalyzes two reactions: the carboxylation of D-ribulose 1,5-bisphosphate, the primary event in carbon dioxide fixation, as well as the oxidative fragmentation of the pentose substrate in the photorespiration process. Both reactions occur simultaneously and in competition at the same active site.</text>
</comment>
<comment type="catalytic activity">
    <reaction evidence="1">
        <text>2 (2R)-3-phosphoglycerate + 2 H(+) = D-ribulose 1,5-bisphosphate + CO2 + H2O</text>
        <dbReference type="Rhea" id="RHEA:23124"/>
        <dbReference type="ChEBI" id="CHEBI:15377"/>
        <dbReference type="ChEBI" id="CHEBI:15378"/>
        <dbReference type="ChEBI" id="CHEBI:16526"/>
        <dbReference type="ChEBI" id="CHEBI:57870"/>
        <dbReference type="ChEBI" id="CHEBI:58272"/>
        <dbReference type="EC" id="4.1.1.39"/>
    </reaction>
</comment>
<comment type="catalytic activity">
    <reaction evidence="1">
        <text>D-ribulose 1,5-bisphosphate + O2 = 2-phosphoglycolate + (2R)-3-phosphoglycerate + 2 H(+)</text>
        <dbReference type="Rhea" id="RHEA:36631"/>
        <dbReference type="ChEBI" id="CHEBI:15378"/>
        <dbReference type="ChEBI" id="CHEBI:15379"/>
        <dbReference type="ChEBI" id="CHEBI:57870"/>
        <dbReference type="ChEBI" id="CHEBI:58033"/>
        <dbReference type="ChEBI" id="CHEBI:58272"/>
    </reaction>
</comment>
<comment type="cofactor">
    <cofactor evidence="1">
        <name>Mg(2+)</name>
        <dbReference type="ChEBI" id="CHEBI:18420"/>
    </cofactor>
    <text evidence="1">Binds 1 Mg(2+) ion per subunit.</text>
</comment>
<comment type="subunit">
    <text evidence="1">Heterohexadecamer of 8 large chains and 8 small chains; disulfide-linked. The disulfide link is formed within the large subunit homodimers.</text>
</comment>
<comment type="subcellular location">
    <subcellularLocation>
        <location>Plastid</location>
        <location>Chloroplast</location>
    </subcellularLocation>
</comment>
<comment type="PTM">
    <text evidence="1">The disulfide bond which can form in the large chain dimeric partners within the hexadecamer appears to be associated with oxidative stress and protein turnover.</text>
</comment>
<comment type="miscellaneous">
    <text evidence="1">The basic functional RuBisCO is composed of a large chain homodimer in a 'head-to-tail' conformation. In form I RuBisCO this homodimer is arranged in a barrel-like tetramer with the small subunits forming a tetrameric 'cap' on each end of the 'barrel'.</text>
</comment>
<comment type="similarity">
    <text evidence="1">Belongs to the RuBisCO large chain family. Type I subfamily.</text>
</comment>